<keyword id="KW-1185">Reference proteome</keyword>
<keyword id="KW-0687">Ribonucleoprotein</keyword>
<keyword id="KW-0689">Ribosomal protein</keyword>
<keyword id="KW-0694">RNA-binding</keyword>
<keyword id="KW-0699">rRNA-binding</keyword>
<keyword id="KW-0820">tRNA-binding</keyword>
<sequence>MARIAGIDLPNNKQLQIALTSIYGIGRARALEICRKTDILPEKRAKDLDNDEVNKLRKIIESDYVVEGKLRSELAMSIKRLMDIACYRGLRHRKGLPLRGQRTKTNARTRKGKRKTVANKKMAAK</sequence>
<evidence type="ECO:0000255" key="1">
    <source>
        <dbReference type="HAMAP-Rule" id="MF_01315"/>
    </source>
</evidence>
<evidence type="ECO:0000256" key="2">
    <source>
        <dbReference type="SAM" id="MobiDB-lite"/>
    </source>
</evidence>
<evidence type="ECO:0000305" key="3"/>
<dbReference type="EMBL" id="CP000049">
    <property type="protein sequence ID" value="AAX17828.1"/>
    <property type="molecule type" value="Genomic_DNA"/>
</dbReference>
<dbReference type="RefSeq" id="WP_011772446.1">
    <property type="nucleotide sequence ID" value="NZ_CP073176.1"/>
</dbReference>
<dbReference type="SMR" id="A1QZT6"/>
<dbReference type="KEGG" id="btu:BT0500"/>
<dbReference type="eggNOG" id="COG0099">
    <property type="taxonomic scope" value="Bacteria"/>
</dbReference>
<dbReference type="HOGENOM" id="CLU_103849_1_2_12"/>
<dbReference type="Proteomes" id="UP000001205">
    <property type="component" value="Chromosome"/>
</dbReference>
<dbReference type="GO" id="GO:0005829">
    <property type="term" value="C:cytosol"/>
    <property type="evidence" value="ECO:0007669"/>
    <property type="project" value="TreeGrafter"/>
</dbReference>
<dbReference type="GO" id="GO:0015935">
    <property type="term" value="C:small ribosomal subunit"/>
    <property type="evidence" value="ECO:0007669"/>
    <property type="project" value="TreeGrafter"/>
</dbReference>
<dbReference type="GO" id="GO:0019843">
    <property type="term" value="F:rRNA binding"/>
    <property type="evidence" value="ECO:0007669"/>
    <property type="project" value="UniProtKB-UniRule"/>
</dbReference>
<dbReference type="GO" id="GO:0003735">
    <property type="term" value="F:structural constituent of ribosome"/>
    <property type="evidence" value="ECO:0007669"/>
    <property type="project" value="InterPro"/>
</dbReference>
<dbReference type="GO" id="GO:0000049">
    <property type="term" value="F:tRNA binding"/>
    <property type="evidence" value="ECO:0007669"/>
    <property type="project" value="UniProtKB-UniRule"/>
</dbReference>
<dbReference type="GO" id="GO:0006412">
    <property type="term" value="P:translation"/>
    <property type="evidence" value="ECO:0007669"/>
    <property type="project" value="UniProtKB-UniRule"/>
</dbReference>
<dbReference type="FunFam" id="1.10.8.50:FF:000001">
    <property type="entry name" value="30S ribosomal protein S13"/>
    <property type="match status" value="1"/>
</dbReference>
<dbReference type="FunFam" id="4.10.910.10:FF:000001">
    <property type="entry name" value="30S ribosomal protein S13"/>
    <property type="match status" value="1"/>
</dbReference>
<dbReference type="Gene3D" id="1.10.8.50">
    <property type="match status" value="1"/>
</dbReference>
<dbReference type="Gene3D" id="4.10.910.10">
    <property type="entry name" value="30s ribosomal protein s13, domain 2"/>
    <property type="match status" value="1"/>
</dbReference>
<dbReference type="HAMAP" id="MF_01315">
    <property type="entry name" value="Ribosomal_uS13"/>
    <property type="match status" value="1"/>
</dbReference>
<dbReference type="InterPro" id="IPR027437">
    <property type="entry name" value="Rbsml_uS13_C"/>
</dbReference>
<dbReference type="InterPro" id="IPR001892">
    <property type="entry name" value="Ribosomal_uS13"/>
</dbReference>
<dbReference type="InterPro" id="IPR010979">
    <property type="entry name" value="Ribosomal_uS13-like_H2TH"/>
</dbReference>
<dbReference type="InterPro" id="IPR019980">
    <property type="entry name" value="Ribosomal_uS13_bac-type"/>
</dbReference>
<dbReference type="InterPro" id="IPR018269">
    <property type="entry name" value="Ribosomal_uS13_CS"/>
</dbReference>
<dbReference type="NCBIfam" id="TIGR03631">
    <property type="entry name" value="uS13_bact"/>
    <property type="match status" value="1"/>
</dbReference>
<dbReference type="PANTHER" id="PTHR10871">
    <property type="entry name" value="30S RIBOSOMAL PROTEIN S13/40S RIBOSOMAL PROTEIN S18"/>
    <property type="match status" value="1"/>
</dbReference>
<dbReference type="PANTHER" id="PTHR10871:SF1">
    <property type="entry name" value="SMALL RIBOSOMAL SUBUNIT PROTEIN US13M"/>
    <property type="match status" value="1"/>
</dbReference>
<dbReference type="Pfam" id="PF00416">
    <property type="entry name" value="Ribosomal_S13"/>
    <property type="match status" value="1"/>
</dbReference>
<dbReference type="PIRSF" id="PIRSF002134">
    <property type="entry name" value="Ribosomal_S13"/>
    <property type="match status" value="1"/>
</dbReference>
<dbReference type="SUPFAM" id="SSF46946">
    <property type="entry name" value="S13-like H2TH domain"/>
    <property type="match status" value="1"/>
</dbReference>
<dbReference type="PROSITE" id="PS00646">
    <property type="entry name" value="RIBOSOMAL_S13_1"/>
    <property type="match status" value="1"/>
</dbReference>
<dbReference type="PROSITE" id="PS50159">
    <property type="entry name" value="RIBOSOMAL_S13_2"/>
    <property type="match status" value="1"/>
</dbReference>
<name>RS13_BORT9</name>
<protein>
    <recommendedName>
        <fullName evidence="1">Small ribosomal subunit protein uS13</fullName>
    </recommendedName>
    <alternativeName>
        <fullName evidence="3">30S ribosomal protein S13</fullName>
    </alternativeName>
</protein>
<feature type="chain" id="PRO_1000165603" description="Small ribosomal subunit protein uS13">
    <location>
        <begin position="1"/>
        <end position="125"/>
    </location>
</feature>
<feature type="region of interest" description="Disordered" evidence="2">
    <location>
        <begin position="99"/>
        <end position="125"/>
    </location>
</feature>
<accession>A1QZT6</accession>
<comment type="function">
    <text evidence="1">Located at the top of the head of the 30S subunit, it contacts several helices of the 16S rRNA. In the 70S ribosome it contacts the 23S rRNA (bridge B1a) and protein L5 of the 50S subunit (bridge B1b), connecting the 2 subunits; these bridges are implicated in subunit movement. Contacts the tRNAs in the A and P-sites.</text>
</comment>
<comment type="subunit">
    <text evidence="1">Part of the 30S ribosomal subunit. Forms a loose heterodimer with protein S19. Forms two bridges to the 50S subunit in the 70S ribosome.</text>
</comment>
<comment type="similarity">
    <text evidence="1">Belongs to the universal ribosomal protein uS13 family.</text>
</comment>
<organism>
    <name type="scientific">Borrelia turicatae (strain 91E135)</name>
    <dbReference type="NCBI Taxonomy" id="314724"/>
    <lineage>
        <taxon>Bacteria</taxon>
        <taxon>Pseudomonadati</taxon>
        <taxon>Spirochaetota</taxon>
        <taxon>Spirochaetia</taxon>
        <taxon>Spirochaetales</taxon>
        <taxon>Borreliaceae</taxon>
        <taxon>Borrelia</taxon>
    </lineage>
</organism>
<proteinExistence type="inferred from homology"/>
<gene>
    <name evidence="1" type="primary">rpsM</name>
    <name type="ordered locus">BT0500</name>
</gene>
<reference key="1">
    <citation type="submission" date="2004-12" db="EMBL/GenBank/DDBJ databases">
        <title>The genome sequence of Borrelia hermsii and Borrelia turicatae: comparative analysis of two agents of endemic N. America relapsing fever.</title>
        <authorList>
            <person name="Porcella S.F."/>
            <person name="Raffel S.J."/>
            <person name="Schrumpf M.E."/>
            <person name="Montgomery B."/>
            <person name="Smith T."/>
            <person name="Schwan T.G."/>
        </authorList>
    </citation>
    <scope>NUCLEOTIDE SEQUENCE [LARGE SCALE GENOMIC DNA]</scope>
    <source>
        <strain>91E135</strain>
    </source>
</reference>